<dbReference type="EMBL" id="CP000887">
    <property type="protein sequence ID" value="ACD72669.1"/>
    <property type="molecule type" value="Genomic_DNA"/>
</dbReference>
<dbReference type="RefSeq" id="WP_002964355.1">
    <property type="nucleotide sequence ID" value="NC_010742.1"/>
</dbReference>
<dbReference type="SMR" id="B2S672"/>
<dbReference type="GeneID" id="97533531"/>
<dbReference type="KEGG" id="bmc:BAbS19_I11640"/>
<dbReference type="HOGENOM" id="CLU_078858_2_1_5"/>
<dbReference type="Proteomes" id="UP000002565">
    <property type="component" value="Chromosome 1"/>
</dbReference>
<dbReference type="GO" id="GO:0022625">
    <property type="term" value="C:cytosolic large ribosomal subunit"/>
    <property type="evidence" value="ECO:0007669"/>
    <property type="project" value="TreeGrafter"/>
</dbReference>
<dbReference type="GO" id="GO:0019843">
    <property type="term" value="F:rRNA binding"/>
    <property type="evidence" value="ECO:0007669"/>
    <property type="project" value="UniProtKB-UniRule"/>
</dbReference>
<dbReference type="GO" id="GO:0003735">
    <property type="term" value="F:structural constituent of ribosome"/>
    <property type="evidence" value="ECO:0007669"/>
    <property type="project" value="InterPro"/>
</dbReference>
<dbReference type="GO" id="GO:0000049">
    <property type="term" value="F:tRNA binding"/>
    <property type="evidence" value="ECO:0007669"/>
    <property type="project" value="UniProtKB-KW"/>
</dbReference>
<dbReference type="GO" id="GO:0006412">
    <property type="term" value="P:translation"/>
    <property type="evidence" value="ECO:0007669"/>
    <property type="project" value="UniProtKB-UniRule"/>
</dbReference>
<dbReference type="CDD" id="cd01433">
    <property type="entry name" value="Ribosomal_L16_L10e"/>
    <property type="match status" value="1"/>
</dbReference>
<dbReference type="FunFam" id="3.90.1170.10:FF:000001">
    <property type="entry name" value="50S ribosomal protein L16"/>
    <property type="match status" value="1"/>
</dbReference>
<dbReference type="Gene3D" id="3.90.1170.10">
    <property type="entry name" value="Ribosomal protein L10e/L16"/>
    <property type="match status" value="1"/>
</dbReference>
<dbReference type="HAMAP" id="MF_01342">
    <property type="entry name" value="Ribosomal_uL16"/>
    <property type="match status" value="1"/>
</dbReference>
<dbReference type="InterPro" id="IPR047873">
    <property type="entry name" value="Ribosomal_uL16"/>
</dbReference>
<dbReference type="InterPro" id="IPR000114">
    <property type="entry name" value="Ribosomal_uL16_bact-type"/>
</dbReference>
<dbReference type="InterPro" id="IPR020798">
    <property type="entry name" value="Ribosomal_uL16_CS"/>
</dbReference>
<dbReference type="InterPro" id="IPR016180">
    <property type="entry name" value="Ribosomal_uL16_dom"/>
</dbReference>
<dbReference type="InterPro" id="IPR036920">
    <property type="entry name" value="Ribosomal_uL16_sf"/>
</dbReference>
<dbReference type="NCBIfam" id="TIGR01164">
    <property type="entry name" value="rplP_bact"/>
    <property type="match status" value="1"/>
</dbReference>
<dbReference type="PANTHER" id="PTHR12220">
    <property type="entry name" value="50S/60S RIBOSOMAL PROTEIN L16"/>
    <property type="match status" value="1"/>
</dbReference>
<dbReference type="PANTHER" id="PTHR12220:SF13">
    <property type="entry name" value="LARGE RIBOSOMAL SUBUNIT PROTEIN UL16M"/>
    <property type="match status" value="1"/>
</dbReference>
<dbReference type="Pfam" id="PF00252">
    <property type="entry name" value="Ribosomal_L16"/>
    <property type="match status" value="1"/>
</dbReference>
<dbReference type="PRINTS" id="PR00060">
    <property type="entry name" value="RIBOSOMALL16"/>
</dbReference>
<dbReference type="SUPFAM" id="SSF54686">
    <property type="entry name" value="Ribosomal protein L16p/L10e"/>
    <property type="match status" value="1"/>
</dbReference>
<dbReference type="PROSITE" id="PS00586">
    <property type="entry name" value="RIBOSOMAL_L16_1"/>
    <property type="match status" value="1"/>
</dbReference>
<dbReference type="PROSITE" id="PS00701">
    <property type="entry name" value="RIBOSOMAL_L16_2"/>
    <property type="match status" value="1"/>
</dbReference>
<accession>B2S672</accession>
<gene>
    <name evidence="1" type="primary">rplP</name>
    <name type="ordered locus">BAbS19_I11640</name>
</gene>
<keyword id="KW-0687">Ribonucleoprotein</keyword>
<keyword id="KW-0689">Ribosomal protein</keyword>
<keyword id="KW-0694">RNA-binding</keyword>
<keyword id="KW-0699">rRNA-binding</keyword>
<keyword id="KW-0820">tRNA-binding</keyword>
<name>RL16_BRUA1</name>
<feature type="chain" id="PRO_1000142934" description="Large ribosomal subunit protein uL16">
    <location>
        <begin position="1"/>
        <end position="137"/>
    </location>
</feature>
<proteinExistence type="inferred from homology"/>
<protein>
    <recommendedName>
        <fullName evidence="1">Large ribosomal subunit protein uL16</fullName>
    </recommendedName>
    <alternativeName>
        <fullName evidence="2">50S ribosomal protein L16</fullName>
    </alternativeName>
</protein>
<comment type="function">
    <text evidence="1">Binds 23S rRNA and is also seen to make contacts with the A and possibly P site tRNAs.</text>
</comment>
<comment type="subunit">
    <text evidence="1">Part of the 50S ribosomal subunit.</text>
</comment>
<comment type="similarity">
    <text evidence="1">Belongs to the universal ribosomal protein uL16 family.</text>
</comment>
<reference key="1">
    <citation type="journal article" date="2008" name="PLoS ONE">
        <title>Genome sequence of Brucella abortus vaccine strain S19 compared to virulent strains yields candidate virulence genes.</title>
        <authorList>
            <person name="Crasta O.R."/>
            <person name="Folkerts O."/>
            <person name="Fei Z."/>
            <person name="Mane S.P."/>
            <person name="Evans C."/>
            <person name="Martino-Catt S."/>
            <person name="Bricker B."/>
            <person name="Yu G."/>
            <person name="Du L."/>
            <person name="Sobral B.W."/>
        </authorList>
    </citation>
    <scope>NUCLEOTIDE SEQUENCE [LARGE SCALE GENOMIC DNA]</scope>
    <source>
        <strain>S19</strain>
    </source>
</reference>
<sequence length="137" mass="15501">MMQPKRTKFRKQFKGRIHGNSKGGTDLNFGAFGLKALEPERVTARQIEAARRAITRHMKRAGRVWIRIFPDLPVTSKPTEVRMGKGKGSVDYWACRVAPGRVMFELDGVPEDVAREALRLGAAKLPIKTRFIQRIAE</sequence>
<evidence type="ECO:0000255" key="1">
    <source>
        <dbReference type="HAMAP-Rule" id="MF_01342"/>
    </source>
</evidence>
<evidence type="ECO:0000305" key="2"/>
<organism>
    <name type="scientific">Brucella abortus (strain S19)</name>
    <dbReference type="NCBI Taxonomy" id="430066"/>
    <lineage>
        <taxon>Bacteria</taxon>
        <taxon>Pseudomonadati</taxon>
        <taxon>Pseudomonadota</taxon>
        <taxon>Alphaproteobacteria</taxon>
        <taxon>Hyphomicrobiales</taxon>
        <taxon>Brucellaceae</taxon>
        <taxon>Brucella/Ochrobactrum group</taxon>
        <taxon>Brucella</taxon>
    </lineage>
</organism>